<gene>
    <name evidence="1" type="primary">recF</name>
    <name type="ordered locus">BC_0004</name>
</gene>
<organism>
    <name type="scientific">Bacillus cereus (strain ATCC 14579 / DSM 31 / CCUG 7414 / JCM 2152 / NBRC 15305 / NCIMB 9373 / NCTC 2599 / NRRL B-3711)</name>
    <dbReference type="NCBI Taxonomy" id="226900"/>
    <lineage>
        <taxon>Bacteria</taxon>
        <taxon>Bacillati</taxon>
        <taxon>Bacillota</taxon>
        <taxon>Bacilli</taxon>
        <taxon>Bacillales</taxon>
        <taxon>Bacillaceae</taxon>
        <taxon>Bacillus</taxon>
        <taxon>Bacillus cereus group</taxon>
    </lineage>
</organism>
<comment type="function">
    <text evidence="1">The RecF protein is involved in DNA metabolism; it is required for DNA replication and normal SOS inducibility. RecF binds preferentially to single-stranded, linear DNA. It also seems to bind ATP.</text>
</comment>
<comment type="subcellular location">
    <subcellularLocation>
        <location evidence="1">Cytoplasm</location>
    </subcellularLocation>
</comment>
<comment type="similarity">
    <text evidence="1">Belongs to the RecF family.</text>
</comment>
<accession>Q81JD2</accession>
<name>RECF_BACCR</name>
<dbReference type="EMBL" id="AE016877">
    <property type="protein sequence ID" value="AAP07114.1"/>
    <property type="molecule type" value="Genomic_DNA"/>
</dbReference>
<dbReference type="RefSeq" id="NP_829913.1">
    <property type="nucleotide sequence ID" value="NC_004722.1"/>
</dbReference>
<dbReference type="RefSeq" id="WP_000470745.1">
    <property type="nucleotide sequence ID" value="NZ_CP138336.1"/>
</dbReference>
<dbReference type="SMR" id="Q81JD2"/>
<dbReference type="STRING" id="226900.BC_0004"/>
<dbReference type="KEGG" id="bce:BC0004"/>
<dbReference type="PATRIC" id="fig|226900.8.peg.29"/>
<dbReference type="HOGENOM" id="CLU_040267_0_1_9"/>
<dbReference type="OrthoDB" id="9803889at2"/>
<dbReference type="Proteomes" id="UP000001417">
    <property type="component" value="Chromosome"/>
</dbReference>
<dbReference type="GO" id="GO:0005737">
    <property type="term" value="C:cytoplasm"/>
    <property type="evidence" value="ECO:0007669"/>
    <property type="project" value="UniProtKB-SubCell"/>
</dbReference>
<dbReference type="GO" id="GO:0005524">
    <property type="term" value="F:ATP binding"/>
    <property type="evidence" value="ECO:0007669"/>
    <property type="project" value="UniProtKB-UniRule"/>
</dbReference>
<dbReference type="GO" id="GO:0003697">
    <property type="term" value="F:single-stranded DNA binding"/>
    <property type="evidence" value="ECO:0007669"/>
    <property type="project" value="UniProtKB-UniRule"/>
</dbReference>
<dbReference type="GO" id="GO:0006260">
    <property type="term" value="P:DNA replication"/>
    <property type="evidence" value="ECO:0007669"/>
    <property type="project" value="UniProtKB-UniRule"/>
</dbReference>
<dbReference type="GO" id="GO:0000731">
    <property type="term" value="P:DNA synthesis involved in DNA repair"/>
    <property type="evidence" value="ECO:0000318"/>
    <property type="project" value="GO_Central"/>
</dbReference>
<dbReference type="GO" id="GO:0006302">
    <property type="term" value="P:double-strand break repair"/>
    <property type="evidence" value="ECO:0000318"/>
    <property type="project" value="GO_Central"/>
</dbReference>
<dbReference type="GO" id="GO:0009432">
    <property type="term" value="P:SOS response"/>
    <property type="evidence" value="ECO:0007669"/>
    <property type="project" value="UniProtKB-UniRule"/>
</dbReference>
<dbReference type="CDD" id="cd03242">
    <property type="entry name" value="ABC_RecF"/>
    <property type="match status" value="1"/>
</dbReference>
<dbReference type="FunFam" id="1.20.1050.90:FF:000002">
    <property type="entry name" value="DNA replication and repair protein RecF"/>
    <property type="match status" value="1"/>
</dbReference>
<dbReference type="FunFam" id="3.40.50.300:FF:000400">
    <property type="entry name" value="DNA replication and repair protein RecF"/>
    <property type="match status" value="1"/>
</dbReference>
<dbReference type="Gene3D" id="3.40.50.300">
    <property type="entry name" value="P-loop containing nucleotide triphosphate hydrolases"/>
    <property type="match status" value="1"/>
</dbReference>
<dbReference type="Gene3D" id="1.20.1050.90">
    <property type="entry name" value="RecF/RecN/SMC, N-terminal domain"/>
    <property type="match status" value="1"/>
</dbReference>
<dbReference type="HAMAP" id="MF_00365">
    <property type="entry name" value="RecF"/>
    <property type="match status" value="1"/>
</dbReference>
<dbReference type="InterPro" id="IPR001238">
    <property type="entry name" value="DNA-binding_RecF"/>
</dbReference>
<dbReference type="InterPro" id="IPR018078">
    <property type="entry name" value="DNA-binding_RecF_CS"/>
</dbReference>
<dbReference type="InterPro" id="IPR027417">
    <property type="entry name" value="P-loop_NTPase"/>
</dbReference>
<dbReference type="InterPro" id="IPR003395">
    <property type="entry name" value="RecF/RecN/SMC_N"/>
</dbReference>
<dbReference type="InterPro" id="IPR042174">
    <property type="entry name" value="RecF_2"/>
</dbReference>
<dbReference type="NCBIfam" id="TIGR00611">
    <property type="entry name" value="recf"/>
    <property type="match status" value="1"/>
</dbReference>
<dbReference type="PANTHER" id="PTHR32182">
    <property type="entry name" value="DNA REPLICATION AND REPAIR PROTEIN RECF"/>
    <property type="match status" value="1"/>
</dbReference>
<dbReference type="PANTHER" id="PTHR32182:SF0">
    <property type="entry name" value="DNA REPLICATION AND REPAIR PROTEIN RECF"/>
    <property type="match status" value="1"/>
</dbReference>
<dbReference type="Pfam" id="PF02463">
    <property type="entry name" value="SMC_N"/>
    <property type="match status" value="1"/>
</dbReference>
<dbReference type="SUPFAM" id="SSF52540">
    <property type="entry name" value="P-loop containing nucleoside triphosphate hydrolases"/>
    <property type="match status" value="1"/>
</dbReference>
<dbReference type="PROSITE" id="PS00617">
    <property type="entry name" value="RECF_1"/>
    <property type="match status" value="1"/>
</dbReference>
<dbReference type="PROSITE" id="PS00618">
    <property type="entry name" value="RECF_2"/>
    <property type="match status" value="1"/>
</dbReference>
<proteinExistence type="inferred from homology"/>
<protein>
    <recommendedName>
        <fullName evidence="1">DNA replication and repair protein RecF</fullName>
    </recommendedName>
</protein>
<keyword id="KW-0067">ATP-binding</keyword>
<keyword id="KW-0963">Cytoplasm</keyword>
<keyword id="KW-0227">DNA damage</keyword>
<keyword id="KW-0234">DNA repair</keyword>
<keyword id="KW-0235">DNA replication</keyword>
<keyword id="KW-0238">DNA-binding</keyword>
<keyword id="KW-0547">Nucleotide-binding</keyword>
<keyword id="KW-1185">Reference proteome</keyword>
<keyword id="KW-0742">SOS response</keyword>
<sequence length="375" mass="43363">MFISEIQLKNYRNYEKLELSFEDKVNVIIGENAQGKTNLMEAIYVLAMAKSHRTSNDRELIRWDEDFGQIKGKLQKRNSSLSLELNISKKGKKAKLNQLEQQKLSQYIGVMNVVMFAPEDLNLVKGSPQVRRRFLDMELGQIAPVYLYELSQYQKVLTQRNHLLKKMQGNSKNEETMLDVFTLQLIEHGAKILQKRFEFLHLLQEWAAPIHRGISRGLEELEIVYKPSVDVSESMDLSKIKEVYYESFQSVKQREIFRGTTLIGPHRDDLQFFVNSKNVQVFGSQGQQRTTALSLKLAEIELIYSEVKEYPILLLDDVLSELDDYRQSHLLNTIQGKVQTFVTTTSVDGIEHETLKEAKTIHVTNGTVDCEIDRE</sequence>
<feature type="chain" id="PRO_0000196396" description="DNA replication and repair protein RecF">
    <location>
        <begin position="1"/>
        <end position="375"/>
    </location>
</feature>
<feature type="binding site" evidence="1">
    <location>
        <begin position="30"/>
        <end position="37"/>
    </location>
    <ligand>
        <name>ATP</name>
        <dbReference type="ChEBI" id="CHEBI:30616"/>
    </ligand>
</feature>
<reference key="1">
    <citation type="journal article" date="2003" name="Nature">
        <title>Genome sequence of Bacillus cereus and comparative analysis with Bacillus anthracis.</title>
        <authorList>
            <person name="Ivanova N."/>
            <person name="Sorokin A."/>
            <person name="Anderson I."/>
            <person name="Galleron N."/>
            <person name="Candelon B."/>
            <person name="Kapatral V."/>
            <person name="Bhattacharyya A."/>
            <person name="Reznik G."/>
            <person name="Mikhailova N."/>
            <person name="Lapidus A."/>
            <person name="Chu L."/>
            <person name="Mazur M."/>
            <person name="Goltsman E."/>
            <person name="Larsen N."/>
            <person name="D'Souza M."/>
            <person name="Walunas T."/>
            <person name="Grechkin Y."/>
            <person name="Pusch G."/>
            <person name="Haselkorn R."/>
            <person name="Fonstein M."/>
            <person name="Ehrlich S.D."/>
            <person name="Overbeek R."/>
            <person name="Kyrpides N.C."/>
        </authorList>
    </citation>
    <scope>NUCLEOTIDE SEQUENCE [LARGE SCALE GENOMIC DNA]</scope>
    <source>
        <strain>ATCC 14579 / DSM 31 / CCUG 7414 / JCM 2152 / NBRC 15305 / NCIMB 9373 / NCTC 2599 / NRRL B-3711</strain>
    </source>
</reference>
<evidence type="ECO:0000255" key="1">
    <source>
        <dbReference type="HAMAP-Rule" id="MF_00365"/>
    </source>
</evidence>